<feature type="chain" id="PRO_0000302972" description="S-adenosylmethionine synthase">
    <location>
        <begin position="1"/>
        <end position="398"/>
    </location>
</feature>
<feature type="region of interest" description="Flexible loop" evidence="1">
    <location>
        <begin position="108"/>
        <end position="118"/>
    </location>
</feature>
<feature type="binding site" description="in other chain" evidence="1">
    <location>
        <position position="16"/>
    </location>
    <ligand>
        <name>ATP</name>
        <dbReference type="ChEBI" id="CHEBI:30616"/>
        <note>ligand shared between two neighboring subunits</note>
    </ligand>
</feature>
<feature type="binding site" evidence="1">
    <location>
        <position position="18"/>
    </location>
    <ligand>
        <name>Mg(2+)</name>
        <dbReference type="ChEBI" id="CHEBI:18420"/>
    </ligand>
</feature>
<feature type="binding site" evidence="1">
    <location>
        <position position="51"/>
    </location>
    <ligand>
        <name>K(+)</name>
        <dbReference type="ChEBI" id="CHEBI:29103"/>
    </ligand>
</feature>
<feature type="binding site" description="in other chain" evidence="1">
    <location>
        <position position="64"/>
    </location>
    <ligand>
        <name>L-methionine</name>
        <dbReference type="ChEBI" id="CHEBI:57844"/>
        <note>ligand shared between two neighboring subunits</note>
    </ligand>
</feature>
<feature type="binding site" description="in other chain" evidence="1">
    <location>
        <position position="108"/>
    </location>
    <ligand>
        <name>L-methionine</name>
        <dbReference type="ChEBI" id="CHEBI:57844"/>
        <note>ligand shared between two neighboring subunits</note>
    </ligand>
</feature>
<feature type="binding site" description="in other chain" evidence="1">
    <location>
        <begin position="176"/>
        <end position="178"/>
    </location>
    <ligand>
        <name>ATP</name>
        <dbReference type="ChEBI" id="CHEBI:30616"/>
        <note>ligand shared between two neighboring subunits</note>
    </ligand>
</feature>
<feature type="binding site" description="in other chain" evidence="1">
    <location>
        <begin position="242"/>
        <end position="243"/>
    </location>
    <ligand>
        <name>ATP</name>
        <dbReference type="ChEBI" id="CHEBI:30616"/>
        <note>ligand shared between two neighboring subunits</note>
    </ligand>
</feature>
<feature type="binding site" evidence="1">
    <location>
        <position position="251"/>
    </location>
    <ligand>
        <name>ATP</name>
        <dbReference type="ChEBI" id="CHEBI:30616"/>
        <note>ligand shared between two neighboring subunits</note>
    </ligand>
</feature>
<feature type="binding site" evidence="1">
    <location>
        <position position="251"/>
    </location>
    <ligand>
        <name>L-methionine</name>
        <dbReference type="ChEBI" id="CHEBI:57844"/>
        <note>ligand shared between two neighboring subunits</note>
    </ligand>
</feature>
<feature type="binding site" description="in other chain" evidence="1">
    <location>
        <begin position="257"/>
        <end position="258"/>
    </location>
    <ligand>
        <name>ATP</name>
        <dbReference type="ChEBI" id="CHEBI:30616"/>
        <note>ligand shared between two neighboring subunits</note>
    </ligand>
</feature>
<feature type="binding site" evidence="1">
    <location>
        <position position="274"/>
    </location>
    <ligand>
        <name>ATP</name>
        <dbReference type="ChEBI" id="CHEBI:30616"/>
        <note>ligand shared between two neighboring subunits</note>
    </ligand>
</feature>
<feature type="binding site" evidence="1">
    <location>
        <position position="278"/>
    </location>
    <ligand>
        <name>ATP</name>
        <dbReference type="ChEBI" id="CHEBI:30616"/>
        <note>ligand shared between two neighboring subunits</note>
    </ligand>
</feature>
<feature type="binding site" description="in other chain" evidence="1">
    <location>
        <position position="282"/>
    </location>
    <ligand>
        <name>L-methionine</name>
        <dbReference type="ChEBI" id="CHEBI:57844"/>
        <note>ligand shared between two neighboring subunits</note>
    </ligand>
</feature>
<keyword id="KW-0067">ATP-binding</keyword>
<keyword id="KW-0963">Cytoplasm</keyword>
<keyword id="KW-0460">Magnesium</keyword>
<keyword id="KW-0479">Metal-binding</keyword>
<keyword id="KW-0547">Nucleotide-binding</keyword>
<keyword id="KW-0554">One-carbon metabolism</keyword>
<keyword id="KW-0630">Potassium</keyword>
<keyword id="KW-0808">Transferase</keyword>
<name>METK_RHOPS</name>
<sequence>MRASYMFTSESVSEGHPDKVCDRISDEVVDLFFREGPKAGISPWAIRAACETLATTNKVVIAGETRGPASVTNDQIESVVRAAIKDIGYEQEGFHWETCDIEILLHPQSADIAQGVDALQPGTNQEEGAGDQGIMFGYATNETPDLMPAPIFYAHKILRLISEARHSGKEKVLGPDSKSQVTIQYENGKPVGVREIVVSHQHLVEDMTSAHVRERVEPYVRQALPADWITDKTIWHINPTGKFYIGGPDGDTGLTGRKIIVDTYGGAAPHGGGAFSGKDPTKVDRSAAYASRYLAKNIVAAGLADRCTLQLAYAIGVARPLSIYIDTHGTGKVSEDKLEKAVAEAMDLTPRGIRTHLDLNKPIYARTSSYGHFGRTPDADGGFSWEKTDLADALKRAV</sequence>
<gene>
    <name evidence="1" type="primary">metK</name>
    <name type="ordered locus">RPD_1596</name>
</gene>
<dbReference type="EC" id="2.5.1.6" evidence="1"/>
<dbReference type="EMBL" id="CP000283">
    <property type="protein sequence ID" value="ABE38833.1"/>
    <property type="molecule type" value="Genomic_DNA"/>
</dbReference>
<dbReference type="SMR" id="Q13AQ6"/>
<dbReference type="STRING" id="316057.RPD_1596"/>
<dbReference type="KEGG" id="rpd:RPD_1596"/>
<dbReference type="eggNOG" id="COG0192">
    <property type="taxonomic scope" value="Bacteria"/>
</dbReference>
<dbReference type="HOGENOM" id="CLU_041802_1_1_5"/>
<dbReference type="BioCyc" id="RPAL316057:RPD_RS08070-MONOMER"/>
<dbReference type="UniPathway" id="UPA00315">
    <property type="reaction ID" value="UER00080"/>
</dbReference>
<dbReference type="Proteomes" id="UP000001818">
    <property type="component" value="Chromosome"/>
</dbReference>
<dbReference type="GO" id="GO:0005737">
    <property type="term" value="C:cytoplasm"/>
    <property type="evidence" value="ECO:0007669"/>
    <property type="project" value="UniProtKB-SubCell"/>
</dbReference>
<dbReference type="GO" id="GO:0005524">
    <property type="term" value="F:ATP binding"/>
    <property type="evidence" value="ECO:0007669"/>
    <property type="project" value="UniProtKB-UniRule"/>
</dbReference>
<dbReference type="GO" id="GO:0000287">
    <property type="term" value="F:magnesium ion binding"/>
    <property type="evidence" value="ECO:0007669"/>
    <property type="project" value="UniProtKB-UniRule"/>
</dbReference>
<dbReference type="GO" id="GO:0004478">
    <property type="term" value="F:methionine adenosyltransferase activity"/>
    <property type="evidence" value="ECO:0007669"/>
    <property type="project" value="UniProtKB-UniRule"/>
</dbReference>
<dbReference type="GO" id="GO:0006730">
    <property type="term" value="P:one-carbon metabolic process"/>
    <property type="evidence" value="ECO:0007669"/>
    <property type="project" value="UniProtKB-KW"/>
</dbReference>
<dbReference type="GO" id="GO:0006556">
    <property type="term" value="P:S-adenosylmethionine biosynthetic process"/>
    <property type="evidence" value="ECO:0007669"/>
    <property type="project" value="UniProtKB-UniRule"/>
</dbReference>
<dbReference type="CDD" id="cd18079">
    <property type="entry name" value="S-AdoMet_synt"/>
    <property type="match status" value="1"/>
</dbReference>
<dbReference type="FunFam" id="3.30.300.10:FF:000003">
    <property type="entry name" value="S-adenosylmethionine synthase"/>
    <property type="match status" value="1"/>
</dbReference>
<dbReference type="Gene3D" id="3.30.300.10">
    <property type="match status" value="3"/>
</dbReference>
<dbReference type="HAMAP" id="MF_00086">
    <property type="entry name" value="S_AdoMet_synth1"/>
    <property type="match status" value="1"/>
</dbReference>
<dbReference type="InterPro" id="IPR022631">
    <property type="entry name" value="ADOMET_SYNTHASE_CS"/>
</dbReference>
<dbReference type="InterPro" id="IPR022630">
    <property type="entry name" value="S-AdoMet_synt_C"/>
</dbReference>
<dbReference type="InterPro" id="IPR022629">
    <property type="entry name" value="S-AdoMet_synt_central"/>
</dbReference>
<dbReference type="InterPro" id="IPR022628">
    <property type="entry name" value="S-AdoMet_synt_N"/>
</dbReference>
<dbReference type="InterPro" id="IPR002133">
    <property type="entry name" value="S-AdoMet_synthetase"/>
</dbReference>
<dbReference type="InterPro" id="IPR022636">
    <property type="entry name" value="S-AdoMet_synthetase_sfam"/>
</dbReference>
<dbReference type="NCBIfam" id="TIGR01034">
    <property type="entry name" value="metK"/>
    <property type="match status" value="1"/>
</dbReference>
<dbReference type="PANTHER" id="PTHR11964">
    <property type="entry name" value="S-ADENOSYLMETHIONINE SYNTHETASE"/>
    <property type="match status" value="1"/>
</dbReference>
<dbReference type="Pfam" id="PF02773">
    <property type="entry name" value="S-AdoMet_synt_C"/>
    <property type="match status" value="1"/>
</dbReference>
<dbReference type="Pfam" id="PF02772">
    <property type="entry name" value="S-AdoMet_synt_M"/>
    <property type="match status" value="1"/>
</dbReference>
<dbReference type="Pfam" id="PF00438">
    <property type="entry name" value="S-AdoMet_synt_N"/>
    <property type="match status" value="1"/>
</dbReference>
<dbReference type="PIRSF" id="PIRSF000497">
    <property type="entry name" value="MAT"/>
    <property type="match status" value="1"/>
</dbReference>
<dbReference type="SUPFAM" id="SSF55973">
    <property type="entry name" value="S-adenosylmethionine synthetase"/>
    <property type="match status" value="3"/>
</dbReference>
<dbReference type="PROSITE" id="PS00376">
    <property type="entry name" value="ADOMET_SYNTHASE_1"/>
    <property type="match status" value="1"/>
</dbReference>
<dbReference type="PROSITE" id="PS00377">
    <property type="entry name" value="ADOMET_SYNTHASE_2"/>
    <property type="match status" value="1"/>
</dbReference>
<organism>
    <name type="scientific">Rhodopseudomonas palustris (strain BisB5)</name>
    <dbReference type="NCBI Taxonomy" id="316057"/>
    <lineage>
        <taxon>Bacteria</taxon>
        <taxon>Pseudomonadati</taxon>
        <taxon>Pseudomonadota</taxon>
        <taxon>Alphaproteobacteria</taxon>
        <taxon>Hyphomicrobiales</taxon>
        <taxon>Nitrobacteraceae</taxon>
        <taxon>Rhodopseudomonas</taxon>
    </lineage>
</organism>
<comment type="function">
    <text evidence="1">Catalyzes the formation of S-adenosylmethionine (AdoMet) from methionine and ATP. The overall synthetic reaction is composed of two sequential steps, AdoMet formation and the subsequent tripolyphosphate hydrolysis which occurs prior to release of AdoMet from the enzyme.</text>
</comment>
<comment type="catalytic activity">
    <reaction evidence="1">
        <text>L-methionine + ATP + H2O = S-adenosyl-L-methionine + phosphate + diphosphate</text>
        <dbReference type="Rhea" id="RHEA:21080"/>
        <dbReference type="ChEBI" id="CHEBI:15377"/>
        <dbReference type="ChEBI" id="CHEBI:30616"/>
        <dbReference type="ChEBI" id="CHEBI:33019"/>
        <dbReference type="ChEBI" id="CHEBI:43474"/>
        <dbReference type="ChEBI" id="CHEBI:57844"/>
        <dbReference type="ChEBI" id="CHEBI:59789"/>
        <dbReference type="EC" id="2.5.1.6"/>
    </reaction>
</comment>
<comment type="cofactor">
    <cofactor evidence="1">
        <name>Mg(2+)</name>
        <dbReference type="ChEBI" id="CHEBI:18420"/>
    </cofactor>
    <text evidence="1">Binds 2 divalent ions per subunit.</text>
</comment>
<comment type="cofactor">
    <cofactor evidence="1">
        <name>K(+)</name>
        <dbReference type="ChEBI" id="CHEBI:29103"/>
    </cofactor>
    <text evidence="1">Binds 1 potassium ion per subunit.</text>
</comment>
<comment type="pathway">
    <text evidence="1">Amino-acid biosynthesis; S-adenosyl-L-methionine biosynthesis; S-adenosyl-L-methionine from L-methionine: step 1/1.</text>
</comment>
<comment type="subunit">
    <text evidence="1">Homotetramer; dimer of dimers.</text>
</comment>
<comment type="subcellular location">
    <subcellularLocation>
        <location evidence="1">Cytoplasm</location>
    </subcellularLocation>
</comment>
<comment type="similarity">
    <text evidence="1">Belongs to the AdoMet synthase family.</text>
</comment>
<accession>Q13AQ6</accession>
<evidence type="ECO:0000255" key="1">
    <source>
        <dbReference type="HAMAP-Rule" id="MF_00086"/>
    </source>
</evidence>
<protein>
    <recommendedName>
        <fullName evidence="1">S-adenosylmethionine synthase</fullName>
        <shortName evidence="1">AdoMet synthase</shortName>
        <ecNumber evidence="1">2.5.1.6</ecNumber>
    </recommendedName>
    <alternativeName>
        <fullName evidence="1">MAT</fullName>
    </alternativeName>
    <alternativeName>
        <fullName evidence="1">Methionine adenosyltransferase</fullName>
    </alternativeName>
</protein>
<proteinExistence type="inferred from homology"/>
<reference key="1">
    <citation type="submission" date="2006-03" db="EMBL/GenBank/DDBJ databases">
        <title>Complete sequence of Rhodopseudomonas palustris BisB5.</title>
        <authorList>
            <consortium name="US DOE Joint Genome Institute"/>
            <person name="Copeland A."/>
            <person name="Lucas S."/>
            <person name="Lapidus A."/>
            <person name="Barry K."/>
            <person name="Detter J.C."/>
            <person name="Glavina del Rio T."/>
            <person name="Hammon N."/>
            <person name="Israni S."/>
            <person name="Dalin E."/>
            <person name="Tice H."/>
            <person name="Pitluck S."/>
            <person name="Chain P."/>
            <person name="Malfatti S."/>
            <person name="Shin M."/>
            <person name="Vergez L."/>
            <person name="Schmutz J."/>
            <person name="Larimer F."/>
            <person name="Land M."/>
            <person name="Hauser L."/>
            <person name="Pelletier D.A."/>
            <person name="Kyrpides N."/>
            <person name="Lykidis A."/>
            <person name="Oda Y."/>
            <person name="Harwood C.S."/>
            <person name="Richardson P."/>
        </authorList>
    </citation>
    <scope>NUCLEOTIDE SEQUENCE [LARGE SCALE GENOMIC DNA]</scope>
    <source>
        <strain>BisB5</strain>
    </source>
</reference>